<accession>Q57ST2</accession>
<evidence type="ECO:0000255" key="1">
    <source>
        <dbReference type="HAMAP-Rule" id="MF_00412"/>
    </source>
</evidence>
<name>PROA_SALCH</name>
<organism>
    <name type="scientific">Salmonella choleraesuis (strain SC-B67)</name>
    <dbReference type="NCBI Taxonomy" id="321314"/>
    <lineage>
        <taxon>Bacteria</taxon>
        <taxon>Pseudomonadati</taxon>
        <taxon>Pseudomonadota</taxon>
        <taxon>Gammaproteobacteria</taxon>
        <taxon>Enterobacterales</taxon>
        <taxon>Enterobacteriaceae</taxon>
        <taxon>Salmonella</taxon>
    </lineage>
</organism>
<sequence length="416" mass="44595">MLEQMGIAAKAASYKLALLSSGEKNRVLEKIADELEAQMESILSANVQDVEQARANGLSEAMLDRLALTPARLKAIADDVRQVCNLADPVGQVIDGGLLDSGLRLERRRVPLGVVGVIYEARPNVTVDVASLCLKTGNAVILRGGKETHRTNAATVRVIQKALKACGLPEAAVQAIDNPDRSLVNEMLRMDKYIDMLIPRGGAGLHKLCREQSTIPVITGGIGVCHIFVDSSADIAPALKIIVNAKTQRPSTCNTVETLLVHQDIAERFLPALSKQMAESGVTLHGDETVMQALHGPAKLVPLKPEELDNEFLSLDLNVVVVENMDGAIAHIREHGTQHSDAILTSDMHNAARFVNEVDSAAVYVNASTRFTDGGQFGLGAEVAVSTQKLHARGPMGLEALTTYKWIGFGDGTIRA</sequence>
<reference key="1">
    <citation type="journal article" date="2005" name="Nucleic Acids Res.">
        <title>The genome sequence of Salmonella enterica serovar Choleraesuis, a highly invasive and resistant zoonotic pathogen.</title>
        <authorList>
            <person name="Chiu C.-H."/>
            <person name="Tang P."/>
            <person name="Chu C."/>
            <person name="Hu S."/>
            <person name="Bao Q."/>
            <person name="Yu J."/>
            <person name="Chou Y.-Y."/>
            <person name="Wang H.-S."/>
            <person name="Lee Y.-S."/>
        </authorList>
    </citation>
    <scope>NUCLEOTIDE SEQUENCE [LARGE SCALE GENOMIC DNA]</scope>
    <source>
        <strain>SC-B67</strain>
    </source>
</reference>
<feature type="chain" id="PRO_0000189775" description="Gamma-glutamyl phosphate reductase">
    <location>
        <begin position="1"/>
        <end position="416"/>
    </location>
</feature>
<comment type="function">
    <text evidence="1">Catalyzes the NADPH-dependent reduction of L-glutamate 5-phosphate into L-glutamate 5-semialdehyde and phosphate. The product spontaneously undergoes cyclization to form 1-pyrroline-5-carboxylate.</text>
</comment>
<comment type="catalytic activity">
    <reaction evidence="1">
        <text>L-glutamate 5-semialdehyde + phosphate + NADP(+) = L-glutamyl 5-phosphate + NADPH + H(+)</text>
        <dbReference type="Rhea" id="RHEA:19541"/>
        <dbReference type="ChEBI" id="CHEBI:15378"/>
        <dbReference type="ChEBI" id="CHEBI:43474"/>
        <dbReference type="ChEBI" id="CHEBI:57783"/>
        <dbReference type="ChEBI" id="CHEBI:58066"/>
        <dbReference type="ChEBI" id="CHEBI:58274"/>
        <dbReference type="ChEBI" id="CHEBI:58349"/>
        <dbReference type="EC" id="1.2.1.41"/>
    </reaction>
</comment>
<comment type="pathway">
    <text evidence="1">Amino-acid biosynthesis; L-proline biosynthesis; L-glutamate 5-semialdehyde from L-glutamate: step 2/2.</text>
</comment>
<comment type="subcellular location">
    <subcellularLocation>
        <location evidence="1">Cytoplasm</location>
    </subcellularLocation>
</comment>
<comment type="similarity">
    <text evidence="1">Belongs to the gamma-glutamyl phosphate reductase family.</text>
</comment>
<protein>
    <recommendedName>
        <fullName evidence="1">Gamma-glutamyl phosphate reductase</fullName>
        <shortName evidence="1">GPR</shortName>
        <ecNumber evidence="1">1.2.1.41</ecNumber>
    </recommendedName>
    <alternativeName>
        <fullName evidence="1">Glutamate-5-semialdehyde dehydrogenase</fullName>
    </alternativeName>
    <alternativeName>
        <fullName evidence="1">Glutamyl-gamma-semialdehyde dehydrogenase</fullName>
        <shortName evidence="1">GSA dehydrogenase</shortName>
    </alternativeName>
</protein>
<keyword id="KW-0028">Amino-acid biosynthesis</keyword>
<keyword id="KW-0963">Cytoplasm</keyword>
<keyword id="KW-0521">NADP</keyword>
<keyword id="KW-0560">Oxidoreductase</keyword>
<keyword id="KW-0641">Proline biosynthesis</keyword>
<gene>
    <name evidence="1" type="primary">proA</name>
    <name type="ordered locus">SCH_0323</name>
</gene>
<dbReference type="EC" id="1.2.1.41" evidence="1"/>
<dbReference type="EMBL" id="AE017220">
    <property type="protein sequence ID" value="AAX64229.1"/>
    <property type="molecule type" value="Genomic_DNA"/>
</dbReference>
<dbReference type="RefSeq" id="WP_000893222.1">
    <property type="nucleotide sequence ID" value="NC_006905.1"/>
</dbReference>
<dbReference type="SMR" id="Q57ST2"/>
<dbReference type="KEGG" id="sec:SCH_0323"/>
<dbReference type="HOGENOM" id="CLU_030231_0_0_6"/>
<dbReference type="UniPathway" id="UPA00098">
    <property type="reaction ID" value="UER00360"/>
</dbReference>
<dbReference type="Proteomes" id="UP000000538">
    <property type="component" value="Chromosome"/>
</dbReference>
<dbReference type="GO" id="GO:0005737">
    <property type="term" value="C:cytoplasm"/>
    <property type="evidence" value="ECO:0007669"/>
    <property type="project" value="UniProtKB-SubCell"/>
</dbReference>
<dbReference type="GO" id="GO:0004350">
    <property type="term" value="F:glutamate-5-semialdehyde dehydrogenase activity"/>
    <property type="evidence" value="ECO:0007669"/>
    <property type="project" value="UniProtKB-UniRule"/>
</dbReference>
<dbReference type="GO" id="GO:0050661">
    <property type="term" value="F:NADP binding"/>
    <property type="evidence" value="ECO:0007669"/>
    <property type="project" value="InterPro"/>
</dbReference>
<dbReference type="GO" id="GO:0055129">
    <property type="term" value="P:L-proline biosynthetic process"/>
    <property type="evidence" value="ECO:0007669"/>
    <property type="project" value="UniProtKB-UniRule"/>
</dbReference>
<dbReference type="CDD" id="cd07079">
    <property type="entry name" value="ALDH_F18-19_ProA-GPR"/>
    <property type="match status" value="1"/>
</dbReference>
<dbReference type="FunFam" id="3.40.309.10:FF:000006">
    <property type="entry name" value="Gamma-glutamyl phosphate reductase"/>
    <property type="match status" value="1"/>
</dbReference>
<dbReference type="Gene3D" id="3.40.605.10">
    <property type="entry name" value="Aldehyde Dehydrogenase, Chain A, domain 1"/>
    <property type="match status" value="1"/>
</dbReference>
<dbReference type="Gene3D" id="3.40.309.10">
    <property type="entry name" value="Aldehyde Dehydrogenase, Chain A, domain 2"/>
    <property type="match status" value="1"/>
</dbReference>
<dbReference type="HAMAP" id="MF_00412">
    <property type="entry name" value="ProA"/>
    <property type="match status" value="1"/>
</dbReference>
<dbReference type="InterPro" id="IPR016161">
    <property type="entry name" value="Ald_DH/histidinol_DH"/>
</dbReference>
<dbReference type="InterPro" id="IPR016163">
    <property type="entry name" value="Ald_DH_C"/>
</dbReference>
<dbReference type="InterPro" id="IPR016162">
    <property type="entry name" value="Ald_DH_N"/>
</dbReference>
<dbReference type="InterPro" id="IPR015590">
    <property type="entry name" value="Aldehyde_DH_dom"/>
</dbReference>
<dbReference type="InterPro" id="IPR020593">
    <property type="entry name" value="G-glutamylP_reductase_CS"/>
</dbReference>
<dbReference type="InterPro" id="IPR012134">
    <property type="entry name" value="Glu-5-SA_DH"/>
</dbReference>
<dbReference type="InterPro" id="IPR000965">
    <property type="entry name" value="GPR_dom"/>
</dbReference>
<dbReference type="NCBIfam" id="NF001221">
    <property type="entry name" value="PRK00197.1"/>
    <property type="match status" value="1"/>
</dbReference>
<dbReference type="NCBIfam" id="TIGR00407">
    <property type="entry name" value="proA"/>
    <property type="match status" value="1"/>
</dbReference>
<dbReference type="PANTHER" id="PTHR11063:SF8">
    <property type="entry name" value="DELTA-1-PYRROLINE-5-CARBOXYLATE SYNTHASE"/>
    <property type="match status" value="1"/>
</dbReference>
<dbReference type="PANTHER" id="PTHR11063">
    <property type="entry name" value="GLUTAMATE SEMIALDEHYDE DEHYDROGENASE"/>
    <property type="match status" value="1"/>
</dbReference>
<dbReference type="Pfam" id="PF00171">
    <property type="entry name" value="Aldedh"/>
    <property type="match status" value="1"/>
</dbReference>
<dbReference type="PIRSF" id="PIRSF000151">
    <property type="entry name" value="GPR"/>
    <property type="match status" value="1"/>
</dbReference>
<dbReference type="SUPFAM" id="SSF53720">
    <property type="entry name" value="ALDH-like"/>
    <property type="match status" value="1"/>
</dbReference>
<dbReference type="PROSITE" id="PS01223">
    <property type="entry name" value="PROA"/>
    <property type="match status" value="1"/>
</dbReference>
<proteinExistence type="inferred from homology"/>